<keyword id="KW-0131">Cell cycle</keyword>
<keyword id="KW-0132">Cell division</keyword>
<keyword id="KW-0159">Chromosome partition</keyword>
<keyword id="KW-0963">Cytoplasm</keyword>
<keyword id="KW-0229">DNA integration</keyword>
<keyword id="KW-0233">DNA recombination</keyword>
<keyword id="KW-0238">DNA-binding</keyword>
<keyword id="KW-1185">Reference proteome</keyword>
<protein>
    <recommendedName>
        <fullName evidence="1">Tyrosine recombinase XerC</fullName>
    </recommendedName>
</protein>
<comment type="function">
    <text evidence="1">Site-specific tyrosine recombinase, which acts by catalyzing the cutting and rejoining of the recombining DNA molecules. The XerC-XerD complex is essential to convert dimers of the bacterial chromosome into monomers to permit their segregation at cell division. It also contributes to the segregational stability of plasmids.</text>
</comment>
<comment type="subunit">
    <text evidence="1">Forms a cyclic heterotetrameric complex composed of two molecules of XerC and two molecules of XerD.</text>
</comment>
<comment type="subcellular location">
    <subcellularLocation>
        <location evidence="1">Cytoplasm</location>
    </subcellularLocation>
</comment>
<comment type="similarity">
    <text evidence="1">Belongs to the 'phage' integrase family. XerC subfamily.</text>
</comment>
<proteinExistence type="inferred from homology"/>
<sequence>MSALQPLIDTYLNHIASQRGLSPVTITNYQSNLAEFVALLNENKVGCWTELDGQLVRLMVKTLHKKGLKARSIATKLSALRSFLDYLVQFDILSNNPAKGIAAPKLDKPLPKNVSVDDMFQLLDIDEKDPLSIRDQCMMELMYSSGLRLSELVGINLQDIKLSAKEIMVTGKGSKQRLLPITDRAVATVKIWLKIRPEFCIKDEKALFVSKQKKRISARNVQARMEKWGLKQALPGHINPHKLRHSFATHMLESSGNLRAVQTLLGHADLATTQIYTHLDFQHLSKIYDQAHPRAKRKK</sequence>
<accession>A1SQX0</accession>
<name>XERC_PSYIN</name>
<evidence type="ECO:0000255" key="1">
    <source>
        <dbReference type="HAMAP-Rule" id="MF_01808"/>
    </source>
</evidence>
<evidence type="ECO:0000255" key="2">
    <source>
        <dbReference type="PROSITE-ProRule" id="PRU01246"/>
    </source>
</evidence>
<evidence type="ECO:0000255" key="3">
    <source>
        <dbReference type="PROSITE-ProRule" id="PRU01248"/>
    </source>
</evidence>
<feature type="chain" id="PRO_1000187610" description="Tyrosine recombinase XerC">
    <location>
        <begin position="1"/>
        <end position="299"/>
    </location>
</feature>
<feature type="domain" description="Core-binding (CB)" evidence="3">
    <location>
        <begin position="2"/>
        <end position="88"/>
    </location>
</feature>
<feature type="domain" description="Tyr recombinase" evidence="2">
    <location>
        <begin position="109"/>
        <end position="289"/>
    </location>
</feature>
<feature type="active site" evidence="1">
    <location>
        <position position="148"/>
    </location>
</feature>
<feature type="active site" evidence="1">
    <location>
        <position position="172"/>
    </location>
</feature>
<feature type="active site" evidence="1">
    <location>
        <position position="241"/>
    </location>
</feature>
<feature type="active site" evidence="1">
    <location>
        <position position="244"/>
    </location>
</feature>
<feature type="active site" evidence="1">
    <location>
        <position position="267"/>
    </location>
</feature>
<feature type="active site" description="O-(3'-phospho-DNA)-tyrosine intermediate" evidence="1">
    <location>
        <position position="276"/>
    </location>
</feature>
<gene>
    <name evidence="1" type="primary">xerC</name>
    <name type="ordered locus">Ping_0010</name>
</gene>
<reference key="1">
    <citation type="journal article" date="2008" name="BMC Genomics">
        <title>Genomics of an extreme psychrophile, Psychromonas ingrahamii.</title>
        <authorList>
            <person name="Riley M."/>
            <person name="Staley J.T."/>
            <person name="Danchin A."/>
            <person name="Wang T.Z."/>
            <person name="Brettin T.S."/>
            <person name="Hauser L.J."/>
            <person name="Land M.L."/>
            <person name="Thompson L.S."/>
        </authorList>
    </citation>
    <scope>NUCLEOTIDE SEQUENCE [LARGE SCALE GENOMIC DNA]</scope>
    <source>
        <strain>DSM 17664 / CCUG 51855 / 37</strain>
    </source>
</reference>
<dbReference type="EMBL" id="CP000510">
    <property type="protein sequence ID" value="ABM01885.1"/>
    <property type="molecule type" value="Genomic_DNA"/>
</dbReference>
<dbReference type="RefSeq" id="WP_011768444.1">
    <property type="nucleotide sequence ID" value="NC_008709.1"/>
</dbReference>
<dbReference type="SMR" id="A1SQX0"/>
<dbReference type="STRING" id="357804.Ping_0010"/>
<dbReference type="KEGG" id="pin:Ping_0010"/>
<dbReference type="eggNOG" id="COG4973">
    <property type="taxonomic scope" value="Bacteria"/>
</dbReference>
<dbReference type="HOGENOM" id="CLU_027562_9_0_6"/>
<dbReference type="OrthoDB" id="9801717at2"/>
<dbReference type="Proteomes" id="UP000000639">
    <property type="component" value="Chromosome"/>
</dbReference>
<dbReference type="GO" id="GO:0005737">
    <property type="term" value="C:cytoplasm"/>
    <property type="evidence" value="ECO:0007669"/>
    <property type="project" value="UniProtKB-SubCell"/>
</dbReference>
<dbReference type="GO" id="GO:0003677">
    <property type="term" value="F:DNA binding"/>
    <property type="evidence" value="ECO:0007669"/>
    <property type="project" value="UniProtKB-KW"/>
</dbReference>
<dbReference type="GO" id="GO:0009037">
    <property type="term" value="F:tyrosine-based site-specific recombinase activity"/>
    <property type="evidence" value="ECO:0007669"/>
    <property type="project" value="UniProtKB-UniRule"/>
</dbReference>
<dbReference type="GO" id="GO:0051301">
    <property type="term" value="P:cell division"/>
    <property type="evidence" value="ECO:0007669"/>
    <property type="project" value="UniProtKB-KW"/>
</dbReference>
<dbReference type="GO" id="GO:0007059">
    <property type="term" value="P:chromosome segregation"/>
    <property type="evidence" value="ECO:0007669"/>
    <property type="project" value="UniProtKB-UniRule"/>
</dbReference>
<dbReference type="GO" id="GO:0006313">
    <property type="term" value="P:DNA transposition"/>
    <property type="evidence" value="ECO:0007669"/>
    <property type="project" value="UniProtKB-UniRule"/>
</dbReference>
<dbReference type="CDD" id="cd00798">
    <property type="entry name" value="INT_XerDC_C"/>
    <property type="match status" value="1"/>
</dbReference>
<dbReference type="Gene3D" id="1.10.150.130">
    <property type="match status" value="1"/>
</dbReference>
<dbReference type="Gene3D" id="1.10.443.10">
    <property type="entry name" value="Intergrase catalytic core"/>
    <property type="match status" value="1"/>
</dbReference>
<dbReference type="HAMAP" id="MF_01808">
    <property type="entry name" value="Recomb_XerC_XerD"/>
    <property type="match status" value="1"/>
</dbReference>
<dbReference type="InterPro" id="IPR044068">
    <property type="entry name" value="CB"/>
</dbReference>
<dbReference type="InterPro" id="IPR011010">
    <property type="entry name" value="DNA_brk_join_enz"/>
</dbReference>
<dbReference type="InterPro" id="IPR013762">
    <property type="entry name" value="Integrase-like_cat_sf"/>
</dbReference>
<dbReference type="InterPro" id="IPR002104">
    <property type="entry name" value="Integrase_catalytic"/>
</dbReference>
<dbReference type="InterPro" id="IPR010998">
    <property type="entry name" value="Integrase_recombinase_N"/>
</dbReference>
<dbReference type="InterPro" id="IPR004107">
    <property type="entry name" value="Integrase_SAM-like_N"/>
</dbReference>
<dbReference type="InterPro" id="IPR011931">
    <property type="entry name" value="Recomb_XerC"/>
</dbReference>
<dbReference type="InterPro" id="IPR023009">
    <property type="entry name" value="Tyrosine_recombinase_XerC/XerD"/>
</dbReference>
<dbReference type="InterPro" id="IPR050090">
    <property type="entry name" value="Tyrosine_recombinase_XerCD"/>
</dbReference>
<dbReference type="NCBIfam" id="TIGR02224">
    <property type="entry name" value="recomb_XerC"/>
    <property type="match status" value="1"/>
</dbReference>
<dbReference type="PANTHER" id="PTHR30349">
    <property type="entry name" value="PHAGE INTEGRASE-RELATED"/>
    <property type="match status" value="1"/>
</dbReference>
<dbReference type="PANTHER" id="PTHR30349:SF81">
    <property type="entry name" value="TYROSINE RECOMBINASE XERC"/>
    <property type="match status" value="1"/>
</dbReference>
<dbReference type="Pfam" id="PF02899">
    <property type="entry name" value="Phage_int_SAM_1"/>
    <property type="match status" value="1"/>
</dbReference>
<dbReference type="Pfam" id="PF00589">
    <property type="entry name" value="Phage_integrase"/>
    <property type="match status" value="1"/>
</dbReference>
<dbReference type="SUPFAM" id="SSF56349">
    <property type="entry name" value="DNA breaking-rejoining enzymes"/>
    <property type="match status" value="1"/>
</dbReference>
<dbReference type="PROSITE" id="PS51900">
    <property type="entry name" value="CB"/>
    <property type="match status" value="1"/>
</dbReference>
<dbReference type="PROSITE" id="PS51898">
    <property type="entry name" value="TYR_RECOMBINASE"/>
    <property type="match status" value="1"/>
</dbReference>
<organism>
    <name type="scientific">Psychromonas ingrahamii (strain DSM 17664 / CCUG 51855 / 37)</name>
    <dbReference type="NCBI Taxonomy" id="357804"/>
    <lineage>
        <taxon>Bacteria</taxon>
        <taxon>Pseudomonadati</taxon>
        <taxon>Pseudomonadota</taxon>
        <taxon>Gammaproteobacteria</taxon>
        <taxon>Alteromonadales</taxon>
        <taxon>Psychromonadaceae</taxon>
        <taxon>Psychromonas</taxon>
    </lineage>
</organism>